<sequence length="377" mass="43224">MAVSFVTTSPEEEDKPKLGLGNIQTPLIFNPSMLNLQANIPNQFIWPDDEKPSINVLELDVPLIDLQNLLSDPSSTLDASRLISEACKKHGFFLVVNHGISEELISDAHEYTSRFFDMPLSEKQRVLRKSGESVGYASSFTGRFSTKLPWKETLSFRFCDDMSRSKSVQDYFCDALGHGFQPFGKVYQEYCEAMSSLSLKIMELLGLSLGVKRDYFREFFEENDSIMRLNYYPPCIKPDLTLGTGPHCDPTSLTILHQDHVNGLQVFVENQWRSIRPNPKAFVVNIGDTFMALSNDRYKSCLHRAVVNSESERKSLAFFLCPKKDRVVTPPRELLDSITSRRYPDFTWSMFLEFTQKHYRADMNTLQAFSDWLTKPI</sequence>
<protein>
    <recommendedName>
        <fullName evidence="10">Gibberellin 20 oxidase 1</fullName>
        <ecNumber evidence="8">1.14.11.-</ecNumber>
    </recommendedName>
    <alternativeName>
        <fullName evidence="10">GA 20-oxidase 1</fullName>
        <shortName>AtGA20ox1</shortName>
    </alternativeName>
    <alternativeName>
        <fullName>Gibberellin C-20 oxidase 1</fullName>
    </alternativeName>
</protein>
<evidence type="ECO:0000255" key="1"/>
<evidence type="ECO:0000255" key="2">
    <source>
        <dbReference type="PROSITE-ProRule" id="PRU00805"/>
    </source>
</evidence>
<evidence type="ECO:0000269" key="3">
    <source>
    </source>
</evidence>
<evidence type="ECO:0000269" key="4">
    <source>
    </source>
</evidence>
<evidence type="ECO:0000269" key="5">
    <source>
    </source>
</evidence>
<evidence type="ECO:0000269" key="6">
    <source>
    </source>
</evidence>
<evidence type="ECO:0000269" key="7">
    <source>
    </source>
</evidence>
<evidence type="ECO:0000269" key="8">
    <source>
    </source>
</evidence>
<evidence type="ECO:0000305" key="9"/>
<evidence type="ECO:0000305" key="10">
    <source>
    </source>
</evidence>
<comment type="function">
    <text evidence="6 8">Key oxidase enzyme in the biosynthesis of gibberellin that catalyzes the conversion of GA12 to GA9, via a three-step oxidation at C-20 of the GA skeleton. GA53 is less effectively oxidized than GA12 and is only oxidized one step to GA44 (PubMed:7630935). Involved in the promotion of the floral transition, fertility and silique elongation, but plays only a minor role in elongation of seedling organs. Acts redundantly with GA20OX2 (PubMed:18069939).</text>
</comment>
<comment type="catalytic activity">
    <reaction evidence="8">
        <text>gibberellin A12 + 2 2-oxoglutarate + 3 O2 + H(+) = gibberellin A9 + 2 succinate + 3 CO2 + 2 H2O</text>
        <dbReference type="Rhea" id="RHEA:60772"/>
        <dbReference type="ChEBI" id="CHEBI:15377"/>
        <dbReference type="ChEBI" id="CHEBI:15378"/>
        <dbReference type="ChEBI" id="CHEBI:15379"/>
        <dbReference type="ChEBI" id="CHEBI:16526"/>
        <dbReference type="ChEBI" id="CHEBI:16810"/>
        <dbReference type="ChEBI" id="CHEBI:30031"/>
        <dbReference type="ChEBI" id="CHEBI:58627"/>
        <dbReference type="ChEBI" id="CHEBI:73255"/>
    </reaction>
    <physiologicalReaction direction="left-to-right" evidence="8">
        <dbReference type="Rhea" id="RHEA:60773"/>
    </physiologicalReaction>
</comment>
<comment type="catalytic activity">
    <reaction evidence="8">
        <text>gibberellin A12 + 2-oxoglutarate + O2 = gibberellin A15 + succinate + CO2</text>
        <dbReference type="Rhea" id="RHEA:60776"/>
        <dbReference type="ChEBI" id="CHEBI:15379"/>
        <dbReference type="ChEBI" id="CHEBI:16526"/>
        <dbReference type="ChEBI" id="CHEBI:16810"/>
        <dbReference type="ChEBI" id="CHEBI:30031"/>
        <dbReference type="ChEBI" id="CHEBI:58627"/>
        <dbReference type="ChEBI" id="CHEBI:143956"/>
    </reaction>
    <physiologicalReaction direction="left-to-right" evidence="8">
        <dbReference type="Rhea" id="RHEA:60777"/>
    </physiologicalReaction>
</comment>
<comment type="catalytic activity">
    <reaction evidence="8">
        <text>gibberellin A15 + 2-oxoglutarate + O2 = gibberellin A24 + succinate + CO2 + H2O</text>
        <dbReference type="Rhea" id="RHEA:60780"/>
        <dbReference type="ChEBI" id="CHEBI:15377"/>
        <dbReference type="ChEBI" id="CHEBI:15379"/>
        <dbReference type="ChEBI" id="CHEBI:16526"/>
        <dbReference type="ChEBI" id="CHEBI:16810"/>
        <dbReference type="ChEBI" id="CHEBI:30031"/>
        <dbReference type="ChEBI" id="CHEBI:143956"/>
        <dbReference type="ChEBI" id="CHEBI:143957"/>
    </reaction>
    <physiologicalReaction direction="left-to-right" evidence="8">
        <dbReference type="Rhea" id="RHEA:60781"/>
    </physiologicalReaction>
</comment>
<comment type="catalytic activity">
    <reaction evidence="8">
        <text>gibberellin A53 + 2-oxoglutarate + O2 = gibberellin A44 + succinate + CO2</text>
        <dbReference type="Rhea" id="RHEA:60800"/>
        <dbReference type="ChEBI" id="CHEBI:15379"/>
        <dbReference type="ChEBI" id="CHEBI:16526"/>
        <dbReference type="ChEBI" id="CHEBI:16810"/>
        <dbReference type="ChEBI" id="CHEBI:30031"/>
        <dbReference type="ChEBI" id="CHEBI:143954"/>
        <dbReference type="ChEBI" id="CHEBI:143955"/>
    </reaction>
    <physiologicalReaction direction="left-to-right" evidence="8">
        <dbReference type="Rhea" id="RHEA:60801"/>
    </physiologicalReaction>
</comment>
<comment type="cofactor">
    <cofactor>
        <name>Fe(2+)</name>
        <dbReference type="ChEBI" id="CHEBI:29033"/>
    </cofactor>
    <text>Binds 1 Fe(2+) ion per subunit.</text>
</comment>
<comment type="cofactor">
    <cofactor>
        <name>L-ascorbate</name>
        <dbReference type="ChEBI" id="CHEBI:38290"/>
    </cofactor>
</comment>
<comment type="pathway">
    <text>Plant hormone biosynthesis; gibberellin biosynthesis.</text>
</comment>
<comment type="tissue specificity">
    <text evidence="6 8">Highly expressed in stems and inflorescence tissues. Detected in seeds, roots, leaves and siliques.</text>
</comment>
<comment type="induction">
    <text evidence="3 4 5 6 7">Circadian-regulation. Up-regulated by auxin, paclobutrazol and cold treatment. Negatively controlled by the level of physiologically active gibberellin.</text>
</comment>
<comment type="disruption phenotype">
    <text evidence="6">Semi-dwarf.</text>
</comment>
<comment type="similarity">
    <text evidence="9">Belongs to the iron/ascorbate-dependent oxidoreductase family. GA20OX subfamily.</text>
</comment>
<proteinExistence type="evidence at protein level"/>
<keyword id="KW-0408">Iron</keyword>
<keyword id="KW-0479">Metal-binding</keyword>
<keyword id="KW-0560">Oxidoreductase</keyword>
<keyword id="KW-1185">Reference proteome</keyword>
<name>GAOX1_ARATH</name>
<dbReference type="EC" id="1.14.11.-" evidence="8"/>
<dbReference type="EMBL" id="X83379">
    <property type="protein sequence ID" value="CAA58293.1"/>
    <property type="molecule type" value="mRNA"/>
</dbReference>
<dbReference type="EMBL" id="U20872">
    <property type="protein sequence ID" value="AAC39313.2"/>
    <property type="molecule type" value="Genomic_DNA"/>
</dbReference>
<dbReference type="EMBL" id="U20873">
    <property type="protein sequence ID" value="AAC39314.2"/>
    <property type="molecule type" value="Genomic_DNA"/>
</dbReference>
<dbReference type="EMBL" id="U20901">
    <property type="protein sequence ID" value="AAA76864.2"/>
    <property type="molecule type" value="Genomic_DNA"/>
</dbReference>
<dbReference type="EMBL" id="AL079350">
    <property type="protein sequence ID" value="CAB45519.1"/>
    <property type="molecule type" value="Genomic_DNA"/>
</dbReference>
<dbReference type="EMBL" id="AL161563">
    <property type="protein sequence ID" value="CAB81353.1"/>
    <property type="molecule type" value="Genomic_DNA"/>
</dbReference>
<dbReference type="EMBL" id="CP002687">
    <property type="protein sequence ID" value="AEE85055.1"/>
    <property type="molecule type" value="Genomic_DNA"/>
</dbReference>
<dbReference type="PIR" id="T10222">
    <property type="entry name" value="T10222"/>
</dbReference>
<dbReference type="RefSeq" id="NP_194272.1">
    <property type="nucleotide sequence ID" value="NM_118674.5"/>
</dbReference>
<dbReference type="SMR" id="Q39110"/>
<dbReference type="FunCoup" id="Q39110">
    <property type="interactions" value="20"/>
</dbReference>
<dbReference type="STRING" id="3702.Q39110"/>
<dbReference type="PaxDb" id="3702-AT4G25420.1"/>
<dbReference type="ProteomicsDB" id="230474"/>
<dbReference type="EnsemblPlants" id="AT4G25420.1">
    <property type="protein sequence ID" value="AT4G25420.1"/>
    <property type="gene ID" value="AT4G25420"/>
</dbReference>
<dbReference type="GeneID" id="828645"/>
<dbReference type="Gramene" id="AT4G25420.1">
    <property type="protein sequence ID" value="AT4G25420.1"/>
    <property type="gene ID" value="AT4G25420"/>
</dbReference>
<dbReference type="KEGG" id="ath:AT4G25420"/>
<dbReference type="Araport" id="AT4G25420"/>
<dbReference type="TAIR" id="AT4G25420">
    <property type="gene designation" value="GA20OX1"/>
</dbReference>
<dbReference type="eggNOG" id="KOG0143">
    <property type="taxonomic scope" value="Eukaryota"/>
</dbReference>
<dbReference type="HOGENOM" id="CLU_010119_16_3_1"/>
<dbReference type="InParanoid" id="Q39110"/>
<dbReference type="OMA" id="GNTPRRY"/>
<dbReference type="OrthoDB" id="288590at2759"/>
<dbReference type="PhylomeDB" id="Q39110"/>
<dbReference type="BioCyc" id="ARA:AT4G25420-MONOMER"/>
<dbReference type="BioCyc" id="MetaCyc:AT4G25420-MONOMER"/>
<dbReference type="UniPathway" id="UPA00390"/>
<dbReference type="PRO" id="PR:Q39110"/>
<dbReference type="Proteomes" id="UP000006548">
    <property type="component" value="Chromosome 4"/>
</dbReference>
<dbReference type="ExpressionAtlas" id="Q39110">
    <property type="expression patterns" value="baseline and differential"/>
</dbReference>
<dbReference type="GO" id="GO:0005737">
    <property type="term" value="C:cytoplasm"/>
    <property type="evidence" value="ECO:0000304"/>
    <property type="project" value="TAIR"/>
</dbReference>
<dbReference type="GO" id="GO:0045544">
    <property type="term" value="F:gibberellin 20-oxidase activity"/>
    <property type="evidence" value="ECO:0000314"/>
    <property type="project" value="TAIR"/>
</dbReference>
<dbReference type="GO" id="GO:0046872">
    <property type="term" value="F:metal ion binding"/>
    <property type="evidence" value="ECO:0007669"/>
    <property type="project" value="UniProtKB-KW"/>
</dbReference>
<dbReference type="GO" id="GO:0009740">
    <property type="term" value="P:gibberellic acid mediated signaling pathway"/>
    <property type="evidence" value="ECO:0000304"/>
    <property type="project" value="TAIR"/>
</dbReference>
<dbReference type="GO" id="GO:0009686">
    <property type="term" value="P:gibberellin biosynthetic process"/>
    <property type="evidence" value="ECO:0000304"/>
    <property type="project" value="TAIR"/>
</dbReference>
<dbReference type="GO" id="GO:0048366">
    <property type="term" value="P:leaf development"/>
    <property type="evidence" value="ECO:0000315"/>
    <property type="project" value="TAIR"/>
</dbReference>
<dbReference type="GO" id="GO:0009739">
    <property type="term" value="P:response to gibberellin"/>
    <property type="evidence" value="ECO:0000270"/>
    <property type="project" value="TAIR"/>
</dbReference>
<dbReference type="GO" id="GO:0048575">
    <property type="term" value="P:short-day photoperiodism, flowering"/>
    <property type="evidence" value="ECO:0000270"/>
    <property type="project" value="TAIR"/>
</dbReference>
<dbReference type="FunFam" id="2.60.120.330:FF:000003">
    <property type="entry name" value="Gibberellin 20 oxidase 2"/>
    <property type="match status" value="1"/>
</dbReference>
<dbReference type="Gene3D" id="2.60.120.330">
    <property type="entry name" value="B-lactam Antibiotic, Isopenicillin N Synthase, Chain"/>
    <property type="match status" value="1"/>
</dbReference>
<dbReference type="InterPro" id="IPR026992">
    <property type="entry name" value="DIOX_N"/>
</dbReference>
<dbReference type="InterPro" id="IPR044861">
    <property type="entry name" value="IPNS-like_FE2OG_OXY"/>
</dbReference>
<dbReference type="InterPro" id="IPR027443">
    <property type="entry name" value="IPNS-like_sf"/>
</dbReference>
<dbReference type="InterPro" id="IPR050231">
    <property type="entry name" value="Iron_ascorbate_oxido_reductase"/>
</dbReference>
<dbReference type="InterPro" id="IPR005123">
    <property type="entry name" value="Oxoglu/Fe-dep_dioxygenase_dom"/>
</dbReference>
<dbReference type="PANTHER" id="PTHR47990">
    <property type="entry name" value="2-OXOGLUTARATE (2OG) AND FE(II)-DEPENDENT OXYGENASE SUPERFAMILY PROTEIN-RELATED"/>
    <property type="match status" value="1"/>
</dbReference>
<dbReference type="Pfam" id="PF03171">
    <property type="entry name" value="2OG-FeII_Oxy"/>
    <property type="match status" value="1"/>
</dbReference>
<dbReference type="Pfam" id="PF14226">
    <property type="entry name" value="DIOX_N"/>
    <property type="match status" value="1"/>
</dbReference>
<dbReference type="PRINTS" id="PR00682">
    <property type="entry name" value="IPNSYNTHASE"/>
</dbReference>
<dbReference type="SUPFAM" id="SSF51197">
    <property type="entry name" value="Clavaminate synthase-like"/>
    <property type="match status" value="1"/>
</dbReference>
<dbReference type="PROSITE" id="PS51471">
    <property type="entry name" value="FE2OG_OXY"/>
    <property type="match status" value="1"/>
</dbReference>
<organism>
    <name type="scientific">Arabidopsis thaliana</name>
    <name type="common">Mouse-ear cress</name>
    <dbReference type="NCBI Taxonomy" id="3702"/>
    <lineage>
        <taxon>Eukaryota</taxon>
        <taxon>Viridiplantae</taxon>
        <taxon>Streptophyta</taxon>
        <taxon>Embryophyta</taxon>
        <taxon>Tracheophyta</taxon>
        <taxon>Spermatophyta</taxon>
        <taxon>Magnoliopsida</taxon>
        <taxon>eudicotyledons</taxon>
        <taxon>Gunneridae</taxon>
        <taxon>Pentapetalae</taxon>
        <taxon>rosids</taxon>
        <taxon>malvids</taxon>
        <taxon>Brassicales</taxon>
        <taxon>Brassicaceae</taxon>
        <taxon>Camelineae</taxon>
        <taxon>Arabidopsis</taxon>
    </lineage>
</organism>
<accession>Q39110</accession>
<accession>Q38844</accession>
<accession>Q9FYN4</accession>
<accession>Q9FYN5</accession>
<accession>Q9STJ5</accession>
<reference key="1">
    <citation type="journal article" date="1995" name="Plant Physiol.">
        <title>Isolation and expression of three gibberellin 20-oxidase cDNA clones from Arabidopsis.</title>
        <authorList>
            <person name="Phillips A.L."/>
            <person name="Ward D.A."/>
            <person name="Uknes S."/>
            <person name="Appleford N.E.J."/>
            <person name="Lange T."/>
            <person name="Huttly A.K."/>
            <person name="Gaskin P."/>
            <person name="Graebe J.E."/>
            <person name="Hedden P."/>
        </authorList>
    </citation>
    <scope>NUCLEOTIDE SEQUENCE [MRNA]</scope>
    <scope>FUNCTION</scope>
    <scope>CATALYTIC ACTIVITY</scope>
    <scope>TISSUE SPECIFICITY</scope>
    <scope>VARIANT LYS-310</scope>
    <source>
        <strain>cv. Landsberg erecta</strain>
        <tissue>Flower bud</tissue>
        <tissue>Stem</tissue>
    </source>
</reference>
<reference key="2">
    <citation type="journal article" date="1995" name="Proc. Natl. Acad. Sci. U.S.A.">
        <title>The GA5 locus of Arabidopsis thaliana encodes a multifunctional gibberellin 20-oxidase: molecular cloning and functional expression.</title>
        <authorList>
            <person name="Xu Y.-L."/>
            <person name="Li L."/>
            <person name="Wu K."/>
            <person name="Peeters A.J.M."/>
            <person name="Gage D.A."/>
            <person name="Zeevaart J.A.D."/>
        </authorList>
    </citation>
    <scope>NUCLEOTIDE SEQUENCE [GENOMIC DNA]</scope>
    <scope>VARIANTS LYS-310 AND 272-TRP--ILE-377 DEL</scope>
    <scope>INDUCTION</scope>
    <source>
        <strain>cv. Columbia</strain>
        <strain>cv. Landsberg erecta</strain>
        <tissue>Leaf</tissue>
    </source>
</reference>
<reference key="3">
    <citation type="journal article" date="1999" name="Nature">
        <title>Sequence and analysis of chromosome 4 of the plant Arabidopsis thaliana.</title>
        <authorList>
            <person name="Mayer K.F.X."/>
            <person name="Schueller C."/>
            <person name="Wambutt R."/>
            <person name="Murphy G."/>
            <person name="Volckaert G."/>
            <person name="Pohl T."/>
            <person name="Duesterhoeft A."/>
            <person name="Stiekema W."/>
            <person name="Entian K.-D."/>
            <person name="Terryn N."/>
            <person name="Harris B."/>
            <person name="Ansorge W."/>
            <person name="Brandt P."/>
            <person name="Grivell L.A."/>
            <person name="Rieger M."/>
            <person name="Weichselgartner M."/>
            <person name="de Simone V."/>
            <person name="Obermaier B."/>
            <person name="Mache R."/>
            <person name="Mueller M."/>
            <person name="Kreis M."/>
            <person name="Delseny M."/>
            <person name="Puigdomenech P."/>
            <person name="Watson M."/>
            <person name="Schmidtheini T."/>
            <person name="Reichert B."/>
            <person name="Portetelle D."/>
            <person name="Perez-Alonso M."/>
            <person name="Boutry M."/>
            <person name="Bancroft I."/>
            <person name="Vos P."/>
            <person name="Hoheisel J."/>
            <person name="Zimmermann W."/>
            <person name="Wedler H."/>
            <person name="Ridley P."/>
            <person name="Langham S.-A."/>
            <person name="McCullagh B."/>
            <person name="Bilham L."/>
            <person name="Robben J."/>
            <person name="van der Schueren J."/>
            <person name="Grymonprez B."/>
            <person name="Chuang Y.-J."/>
            <person name="Vandenbussche F."/>
            <person name="Braeken M."/>
            <person name="Weltjens I."/>
            <person name="Voet M."/>
            <person name="Bastiaens I."/>
            <person name="Aert R."/>
            <person name="Defoor E."/>
            <person name="Weitzenegger T."/>
            <person name="Bothe G."/>
            <person name="Ramsperger U."/>
            <person name="Hilbert H."/>
            <person name="Braun M."/>
            <person name="Holzer E."/>
            <person name="Brandt A."/>
            <person name="Peters S."/>
            <person name="van Staveren M."/>
            <person name="Dirkse W."/>
            <person name="Mooijman P."/>
            <person name="Klein Lankhorst R."/>
            <person name="Rose M."/>
            <person name="Hauf J."/>
            <person name="Koetter P."/>
            <person name="Berneiser S."/>
            <person name="Hempel S."/>
            <person name="Feldpausch M."/>
            <person name="Lamberth S."/>
            <person name="Van den Daele H."/>
            <person name="De Keyser A."/>
            <person name="Buysshaert C."/>
            <person name="Gielen J."/>
            <person name="Villarroel R."/>
            <person name="De Clercq R."/>
            <person name="van Montagu M."/>
            <person name="Rogers J."/>
            <person name="Cronin A."/>
            <person name="Quail M.A."/>
            <person name="Bray-Allen S."/>
            <person name="Clark L."/>
            <person name="Doggett J."/>
            <person name="Hall S."/>
            <person name="Kay M."/>
            <person name="Lennard N."/>
            <person name="McLay K."/>
            <person name="Mayes R."/>
            <person name="Pettett A."/>
            <person name="Rajandream M.A."/>
            <person name="Lyne M."/>
            <person name="Benes V."/>
            <person name="Rechmann S."/>
            <person name="Borkova D."/>
            <person name="Bloecker H."/>
            <person name="Scharfe M."/>
            <person name="Grimm M."/>
            <person name="Loehnert T.-H."/>
            <person name="Dose S."/>
            <person name="de Haan M."/>
            <person name="Maarse A.C."/>
            <person name="Schaefer M."/>
            <person name="Mueller-Auer S."/>
            <person name="Gabel C."/>
            <person name="Fuchs M."/>
            <person name="Fartmann B."/>
            <person name="Granderath K."/>
            <person name="Dauner D."/>
            <person name="Herzl A."/>
            <person name="Neumann S."/>
            <person name="Argiriou A."/>
            <person name="Vitale D."/>
            <person name="Liguori R."/>
            <person name="Piravandi E."/>
            <person name="Massenet O."/>
            <person name="Quigley F."/>
            <person name="Clabauld G."/>
            <person name="Muendlein A."/>
            <person name="Felber R."/>
            <person name="Schnabl S."/>
            <person name="Hiller R."/>
            <person name="Schmidt W."/>
            <person name="Lecharny A."/>
            <person name="Aubourg S."/>
            <person name="Chefdor F."/>
            <person name="Cooke R."/>
            <person name="Berger C."/>
            <person name="Monfort A."/>
            <person name="Casacuberta E."/>
            <person name="Gibbons T."/>
            <person name="Weber N."/>
            <person name="Vandenbol M."/>
            <person name="Bargues M."/>
            <person name="Terol J."/>
            <person name="Torres A."/>
            <person name="Perez-Perez A."/>
            <person name="Purnelle B."/>
            <person name="Bent E."/>
            <person name="Johnson S."/>
            <person name="Tacon D."/>
            <person name="Jesse T."/>
            <person name="Heijnen L."/>
            <person name="Schwarz S."/>
            <person name="Scholler P."/>
            <person name="Heber S."/>
            <person name="Francs P."/>
            <person name="Bielke C."/>
            <person name="Frishman D."/>
            <person name="Haase D."/>
            <person name="Lemcke K."/>
            <person name="Mewes H.-W."/>
            <person name="Stocker S."/>
            <person name="Zaccaria P."/>
            <person name="Bevan M."/>
            <person name="Wilson R.K."/>
            <person name="de la Bastide M."/>
            <person name="Habermann K."/>
            <person name="Parnell L."/>
            <person name="Dedhia N."/>
            <person name="Gnoj L."/>
            <person name="Schutz K."/>
            <person name="Huang E."/>
            <person name="Spiegel L."/>
            <person name="Sekhon M."/>
            <person name="Murray J."/>
            <person name="Sheet P."/>
            <person name="Cordes M."/>
            <person name="Abu-Threideh J."/>
            <person name="Stoneking T."/>
            <person name="Kalicki J."/>
            <person name="Graves T."/>
            <person name="Harmon G."/>
            <person name="Edwards J."/>
            <person name="Latreille P."/>
            <person name="Courtney L."/>
            <person name="Cloud J."/>
            <person name="Abbott A."/>
            <person name="Scott K."/>
            <person name="Johnson D."/>
            <person name="Minx P."/>
            <person name="Bentley D."/>
            <person name="Fulton B."/>
            <person name="Miller N."/>
            <person name="Greco T."/>
            <person name="Kemp K."/>
            <person name="Kramer J."/>
            <person name="Fulton L."/>
            <person name="Mardis E."/>
            <person name="Dante M."/>
            <person name="Pepin K."/>
            <person name="Hillier L.W."/>
            <person name="Nelson J."/>
            <person name="Spieth J."/>
            <person name="Ryan E."/>
            <person name="Andrews S."/>
            <person name="Geisel C."/>
            <person name="Layman D."/>
            <person name="Du H."/>
            <person name="Ali J."/>
            <person name="Berghoff A."/>
            <person name="Jones K."/>
            <person name="Drone K."/>
            <person name="Cotton M."/>
            <person name="Joshu C."/>
            <person name="Antonoiu B."/>
            <person name="Zidanic M."/>
            <person name="Strong C."/>
            <person name="Sun H."/>
            <person name="Lamar B."/>
            <person name="Yordan C."/>
            <person name="Ma P."/>
            <person name="Zhong J."/>
            <person name="Preston R."/>
            <person name="Vil D."/>
            <person name="Shekher M."/>
            <person name="Matero A."/>
            <person name="Shah R."/>
            <person name="Swaby I.K."/>
            <person name="O'Shaughnessy A."/>
            <person name="Rodriguez M."/>
            <person name="Hoffman J."/>
            <person name="Till S."/>
            <person name="Granat S."/>
            <person name="Shohdy N."/>
            <person name="Hasegawa A."/>
            <person name="Hameed A."/>
            <person name="Lodhi M."/>
            <person name="Johnson A."/>
            <person name="Chen E."/>
            <person name="Marra M.A."/>
            <person name="Martienssen R."/>
            <person name="McCombie W.R."/>
        </authorList>
    </citation>
    <scope>NUCLEOTIDE SEQUENCE [LARGE SCALE GENOMIC DNA]</scope>
    <source>
        <strain>cv. Columbia</strain>
    </source>
</reference>
<reference key="4">
    <citation type="journal article" date="2017" name="Plant J.">
        <title>Araport11: a complete reannotation of the Arabidopsis thaliana reference genome.</title>
        <authorList>
            <person name="Cheng C.Y."/>
            <person name="Krishnakumar V."/>
            <person name="Chan A.P."/>
            <person name="Thibaud-Nissen F."/>
            <person name="Schobel S."/>
            <person name="Town C.D."/>
        </authorList>
    </citation>
    <scope>GENOME REANNOTATION</scope>
    <source>
        <strain>cv. Columbia</strain>
    </source>
</reference>
<reference key="5">
    <citation type="journal article" date="2004" name="Plant Cell">
        <title>Activation of gibberellin biosynthesis and response pathways by low temperature during imbibition of Arabidopsis thaliana seeds.</title>
        <authorList>
            <person name="Yamauchi Y."/>
            <person name="Ogawa M."/>
            <person name="Kuwahara A."/>
            <person name="Hanada A."/>
            <person name="Kamiya Y."/>
            <person name="Yamaguchi S."/>
        </authorList>
    </citation>
    <scope>INDUCTION BY COLD</scope>
</reference>
<reference key="6">
    <citation type="journal article" date="2005" name="Plant Physiol.">
        <title>The involvement of gibberellin 20-oxidase genes in phytochrome-regulated petiole elongation of Arabidopsis.</title>
        <authorList>
            <person name="Hisamatsu T."/>
            <person name="King R.W."/>
            <person name="Helliwell C.A."/>
            <person name="Koshioka M."/>
        </authorList>
    </citation>
    <scope>INDUCTION BY LIGHT</scope>
</reference>
<reference key="7">
    <citation type="journal article" date="2006" name="Plant Physiol.">
        <title>Transcriptional regulation of gibberellin metabolism genes by auxin signaling in Arabidopsis.</title>
        <authorList>
            <person name="Frigerio M."/>
            <person name="Alabadi D."/>
            <person name="Perez-Gomez J."/>
            <person name="Garcia-Carcel L."/>
            <person name="Phillips A.L."/>
            <person name="Hedden P."/>
            <person name="Blazquez M.A."/>
        </authorList>
    </citation>
    <scope>INDUCTION BY AUXIN AND PACLOBUTRAZOL</scope>
</reference>
<reference key="8">
    <citation type="journal article" date="2008" name="Plant J.">
        <title>The gibberellin biosynthetic genes AtGA20ox1 and AtGA20ox2 act, partially redundantly, to promote growth and development throughout the Arabidopsis life cycle.</title>
        <authorList>
            <person name="Rieu I."/>
            <person name="Ruiz-Rivero O."/>
            <person name="Fernandez-Garcia N."/>
            <person name="Griffiths J."/>
            <person name="Powers S.J."/>
            <person name="Gong F."/>
            <person name="Linhartova T."/>
            <person name="Eriksson S."/>
            <person name="Nilsson O."/>
            <person name="Thomas S.G."/>
            <person name="Phillips A.L."/>
            <person name="Hedden P."/>
        </authorList>
    </citation>
    <scope>FUNCTION</scope>
    <scope>TISSUE SPECIFICITY</scope>
    <scope>DISRUPTION PHENOTYPE</scope>
    <scope>INDUCTION BY GIBBERELLIN</scope>
    <source>
        <strain>cv. Columbia</strain>
    </source>
</reference>
<reference key="9">
    <citation type="journal article" date="2011" name="Gene">
        <title>Evolutionary analysis of three gibberellin oxidase genes in rice, Arabidopsis, and soybean.</title>
        <authorList>
            <person name="Han F."/>
            <person name="Zhu B."/>
        </authorList>
    </citation>
    <scope>GENE FAMILY</scope>
</reference>
<gene>
    <name type="primary">GA20OX1</name>
    <name type="synonym">20ox1</name>
    <name type="synonym">At2301</name>
    <name type="synonym">GA5</name>
    <name type="ordered locus">At4g25420</name>
    <name type="ORF">T30C3.90</name>
</gene>
<feature type="chain" id="PRO_0000219514" description="Gibberellin 20 oxidase 1">
    <location>
        <begin position="1"/>
        <end position="377"/>
    </location>
</feature>
<feature type="domain" description="Fe2OG dioxygenase" evidence="2">
    <location>
        <begin position="222"/>
        <end position="322"/>
    </location>
</feature>
<feature type="active site" evidence="1">
    <location>
        <position position="313"/>
    </location>
</feature>
<feature type="binding site" evidence="2">
    <location>
        <position position="247"/>
    </location>
    <ligand>
        <name>Fe cation</name>
        <dbReference type="ChEBI" id="CHEBI:24875"/>
    </ligand>
</feature>
<feature type="binding site" evidence="2">
    <location>
        <position position="249"/>
    </location>
    <ligand>
        <name>Fe cation</name>
        <dbReference type="ChEBI" id="CHEBI:24875"/>
    </ligand>
</feature>
<feature type="binding site" evidence="2">
    <location>
        <position position="303"/>
    </location>
    <ligand>
        <name>Fe cation</name>
        <dbReference type="ChEBI" id="CHEBI:24875"/>
    </ligand>
</feature>
<feature type="sequence variant" description="In strain: cv. Landsberg erecta; allele ga5; semidwarfing." evidence="7">
    <location>
        <begin position="272"/>
        <end position="377"/>
    </location>
</feature>
<feature type="sequence variant" description="In strain: cv Landsberg erecta." evidence="7 8">
    <original>E</original>
    <variation>K</variation>
    <location>
        <position position="310"/>
    </location>
</feature>
<feature type="sequence conflict" description="In Ref. 2; AAC39314." evidence="9" ref="2">
    <original>T</original>
    <variation>R</variation>
    <location>
        <position position="7"/>
    </location>
</feature>
<feature type="sequence conflict" description="In Ref. 2; AAC39314." evidence="9" ref="2">
    <original>N</original>
    <variation>D</variation>
    <location>
        <position position="35"/>
    </location>
</feature>
<feature type="sequence conflict" description="In Ref. 2; AAC39314." evidence="9" ref="2">
    <original>IP</original>
    <variation>MA</variation>
    <location>
        <begin position="40"/>
        <end position="41"/>
    </location>
</feature>
<feature type="sequence conflict" description="In Ref. 2; AAC39314." evidence="9" ref="2">
    <original>I</original>
    <variation>H</variation>
    <location>
        <position position="45"/>
    </location>
</feature>
<feature type="sequence conflict" description="In Ref. 2; AAC39314." evidence="9" ref="2">
    <original>INV</original>
    <variation>TLQ</variation>
    <location>
        <begin position="54"/>
        <end position="56"/>
    </location>
</feature>
<feature type="sequence conflict" description="In Ref. 2; AAA76864/AAC39313." evidence="9" ref="2">
    <original>I</original>
    <variation>M</variation>
    <location>
        <position position="236"/>
    </location>
</feature>
<feature type="sequence conflict" description="In Ref. 2; AAC39314." evidence="9" ref="2">
    <original>SE</original>
    <variation>RM</variation>
    <location>
        <begin position="311"/>
        <end position="312"/>
    </location>
</feature>